<reference key="1">
    <citation type="journal article" date="2008" name="J. Bacteriol.">
        <title>The genome sequence of the tomato-pathogenic actinomycete Clavibacter michiganensis subsp. michiganensis NCPPB382 reveals a large island involved in pathogenicity.</title>
        <authorList>
            <person name="Gartemann K.-H."/>
            <person name="Abt B."/>
            <person name="Bekel T."/>
            <person name="Burger A."/>
            <person name="Engemann J."/>
            <person name="Fluegel M."/>
            <person name="Gaigalat L."/>
            <person name="Goesmann A."/>
            <person name="Graefen I."/>
            <person name="Kalinowski J."/>
            <person name="Kaup O."/>
            <person name="Kirchner O."/>
            <person name="Krause L."/>
            <person name="Linke B."/>
            <person name="McHardy A."/>
            <person name="Meyer F."/>
            <person name="Pohle S."/>
            <person name="Rueckert C."/>
            <person name="Schneiker S."/>
            <person name="Zellermann E.-M."/>
            <person name="Puehler A."/>
            <person name="Eichenlaub R."/>
            <person name="Kaiser O."/>
            <person name="Bartels D."/>
        </authorList>
    </citation>
    <scope>NUCLEOTIDE SEQUENCE [LARGE SCALE GENOMIC DNA]</scope>
    <source>
        <strain>NCPPB 382</strain>
    </source>
</reference>
<protein>
    <recommendedName>
        <fullName evidence="1">Lipoyl synthase</fullName>
        <ecNumber evidence="1">2.8.1.8</ecNumber>
    </recommendedName>
    <alternativeName>
        <fullName evidence="1">Lip-syn</fullName>
        <shortName evidence="1">LS</shortName>
    </alternativeName>
    <alternativeName>
        <fullName evidence="1">Lipoate synthase</fullName>
    </alternativeName>
    <alternativeName>
        <fullName evidence="1">Lipoic acid synthase</fullName>
    </alternativeName>
    <alternativeName>
        <fullName evidence="1">Sulfur insertion protein LipA</fullName>
    </alternativeName>
</protein>
<organism>
    <name type="scientific">Clavibacter michiganensis subsp. michiganensis (strain NCPPB 382)</name>
    <dbReference type="NCBI Taxonomy" id="443906"/>
    <lineage>
        <taxon>Bacteria</taxon>
        <taxon>Bacillati</taxon>
        <taxon>Actinomycetota</taxon>
        <taxon>Actinomycetes</taxon>
        <taxon>Micrococcales</taxon>
        <taxon>Microbacteriaceae</taxon>
        <taxon>Clavibacter</taxon>
    </lineage>
</organism>
<comment type="function">
    <text evidence="1">Catalyzes the radical-mediated insertion of two sulfur atoms into the C-6 and C-8 positions of the octanoyl moiety bound to the lipoyl domains of lipoate-dependent enzymes, thereby converting the octanoylated domains into lipoylated derivatives.</text>
</comment>
<comment type="catalytic activity">
    <reaction evidence="1">
        <text>[[Fe-S] cluster scaffold protein carrying a second [4Fe-4S](2+) cluster] + N(6)-octanoyl-L-lysyl-[protein] + 2 oxidized [2Fe-2S]-[ferredoxin] + 2 S-adenosyl-L-methionine + 4 H(+) = [[Fe-S] cluster scaffold protein] + N(6)-[(R)-dihydrolipoyl]-L-lysyl-[protein] + 4 Fe(3+) + 2 hydrogen sulfide + 2 5'-deoxyadenosine + 2 L-methionine + 2 reduced [2Fe-2S]-[ferredoxin]</text>
        <dbReference type="Rhea" id="RHEA:16585"/>
        <dbReference type="Rhea" id="RHEA-COMP:9928"/>
        <dbReference type="Rhea" id="RHEA-COMP:10000"/>
        <dbReference type="Rhea" id="RHEA-COMP:10001"/>
        <dbReference type="Rhea" id="RHEA-COMP:10475"/>
        <dbReference type="Rhea" id="RHEA-COMP:14568"/>
        <dbReference type="Rhea" id="RHEA-COMP:14569"/>
        <dbReference type="ChEBI" id="CHEBI:15378"/>
        <dbReference type="ChEBI" id="CHEBI:17319"/>
        <dbReference type="ChEBI" id="CHEBI:29034"/>
        <dbReference type="ChEBI" id="CHEBI:29919"/>
        <dbReference type="ChEBI" id="CHEBI:33722"/>
        <dbReference type="ChEBI" id="CHEBI:33737"/>
        <dbReference type="ChEBI" id="CHEBI:33738"/>
        <dbReference type="ChEBI" id="CHEBI:57844"/>
        <dbReference type="ChEBI" id="CHEBI:59789"/>
        <dbReference type="ChEBI" id="CHEBI:78809"/>
        <dbReference type="ChEBI" id="CHEBI:83100"/>
        <dbReference type="EC" id="2.8.1.8"/>
    </reaction>
</comment>
<comment type="cofactor">
    <cofactor evidence="1">
        <name>[4Fe-4S] cluster</name>
        <dbReference type="ChEBI" id="CHEBI:49883"/>
    </cofactor>
    <text evidence="1">Binds 2 [4Fe-4S] clusters per subunit. One cluster is coordinated with 3 cysteines and an exchangeable S-adenosyl-L-methionine.</text>
</comment>
<comment type="pathway">
    <text evidence="1">Protein modification; protein lipoylation via endogenous pathway; protein N(6)-(lipoyl)lysine from octanoyl-[acyl-carrier-protein]: step 2/2.</text>
</comment>
<comment type="subcellular location">
    <subcellularLocation>
        <location evidence="1">Cytoplasm</location>
    </subcellularLocation>
</comment>
<comment type="similarity">
    <text evidence="1">Belongs to the radical SAM superfamily. Lipoyl synthase family.</text>
</comment>
<gene>
    <name evidence="1" type="primary">lipA</name>
    <name type="ordered locus">CMM_1208</name>
</gene>
<accession>A5CQ99</accession>
<proteinExistence type="inferred from homology"/>
<keyword id="KW-0004">4Fe-4S</keyword>
<keyword id="KW-0963">Cytoplasm</keyword>
<keyword id="KW-0408">Iron</keyword>
<keyword id="KW-0411">Iron-sulfur</keyword>
<keyword id="KW-0479">Metal-binding</keyword>
<keyword id="KW-0949">S-adenosyl-L-methionine</keyword>
<keyword id="KW-0808">Transferase</keyword>
<sequence>MTAATAPDGRRMLRLEVRNAETPIERKPGWIKTTARMGPEYQALQQLVKTEDLHTVCQEAACPNIYECWEDREATFLIGGSQCTRRCDFCQIDTGKPADYDTDEPRRVADSVRRMGLRYATVTGVARDDLPDEGAWLHAETVRRIHADNPGTGVEILATDFSGNPDLLAEVFSSRPEVFAHNVETVPRIFKRIRPAFRYERSLDVITQARDAGLITKSNLILGMGETRDEVSEALVDLHDAGCDIITVTQYLRPSPRHLPVARWVRPEEFVEIKAEAEAIGFLGVLAGPLVRSSYRAGRLYAQSMRAKGRELPEGLAHLADPANGFAQAVG</sequence>
<evidence type="ECO:0000255" key="1">
    <source>
        <dbReference type="HAMAP-Rule" id="MF_00206"/>
    </source>
</evidence>
<evidence type="ECO:0000255" key="2">
    <source>
        <dbReference type="PROSITE-ProRule" id="PRU01266"/>
    </source>
</evidence>
<name>LIPA_CLAM3</name>
<feature type="chain" id="PRO_0000325239" description="Lipoyl synthase">
    <location>
        <begin position="1"/>
        <end position="331"/>
    </location>
</feature>
<feature type="domain" description="Radical SAM core" evidence="2">
    <location>
        <begin position="69"/>
        <end position="283"/>
    </location>
</feature>
<feature type="binding site" evidence="1">
    <location>
        <position position="57"/>
    </location>
    <ligand>
        <name>[4Fe-4S] cluster</name>
        <dbReference type="ChEBI" id="CHEBI:49883"/>
        <label>1</label>
    </ligand>
</feature>
<feature type="binding site" evidence="1">
    <location>
        <position position="62"/>
    </location>
    <ligand>
        <name>[4Fe-4S] cluster</name>
        <dbReference type="ChEBI" id="CHEBI:49883"/>
        <label>1</label>
    </ligand>
</feature>
<feature type="binding site" evidence="1">
    <location>
        <position position="68"/>
    </location>
    <ligand>
        <name>[4Fe-4S] cluster</name>
        <dbReference type="ChEBI" id="CHEBI:49883"/>
        <label>1</label>
    </ligand>
</feature>
<feature type="binding site" evidence="1">
    <location>
        <position position="83"/>
    </location>
    <ligand>
        <name>[4Fe-4S] cluster</name>
        <dbReference type="ChEBI" id="CHEBI:49883"/>
        <label>2</label>
        <note>4Fe-4S-S-AdoMet</note>
    </ligand>
</feature>
<feature type="binding site" evidence="1">
    <location>
        <position position="87"/>
    </location>
    <ligand>
        <name>[4Fe-4S] cluster</name>
        <dbReference type="ChEBI" id="CHEBI:49883"/>
        <label>2</label>
        <note>4Fe-4S-S-AdoMet</note>
    </ligand>
</feature>
<feature type="binding site" evidence="1">
    <location>
        <position position="90"/>
    </location>
    <ligand>
        <name>[4Fe-4S] cluster</name>
        <dbReference type="ChEBI" id="CHEBI:49883"/>
        <label>2</label>
        <note>4Fe-4S-S-AdoMet</note>
    </ligand>
</feature>
<feature type="binding site" evidence="1">
    <location>
        <position position="294"/>
    </location>
    <ligand>
        <name>[4Fe-4S] cluster</name>
        <dbReference type="ChEBI" id="CHEBI:49883"/>
        <label>1</label>
    </ligand>
</feature>
<dbReference type="EC" id="2.8.1.8" evidence="1"/>
<dbReference type="EMBL" id="AM711867">
    <property type="protein sequence ID" value="CAN01252.1"/>
    <property type="molecule type" value="Genomic_DNA"/>
</dbReference>
<dbReference type="RefSeq" id="WP_012037894.1">
    <property type="nucleotide sequence ID" value="NC_009480.1"/>
</dbReference>
<dbReference type="SMR" id="A5CQ99"/>
<dbReference type="KEGG" id="cmi:CMM_1208"/>
<dbReference type="eggNOG" id="COG0320">
    <property type="taxonomic scope" value="Bacteria"/>
</dbReference>
<dbReference type="HOGENOM" id="CLU_033144_2_1_11"/>
<dbReference type="OrthoDB" id="9787898at2"/>
<dbReference type="UniPathway" id="UPA00538">
    <property type="reaction ID" value="UER00593"/>
</dbReference>
<dbReference type="Proteomes" id="UP000001564">
    <property type="component" value="Chromosome"/>
</dbReference>
<dbReference type="GO" id="GO:0005737">
    <property type="term" value="C:cytoplasm"/>
    <property type="evidence" value="ECO:0007669"/>
    <property type="project" value="UniProtKB-SubCell"/>
</dbReference>
<dbReference type="GO" id="GO:0051539">
    <property type="term" value="F:4 iron, 4 sulfur cluster binding"/>
    <property type="evidence" value="ECO:0007669"/>
    <property type="project" value="UniProtKB-UniRule"/>
</dbReference>
<dbReference type="GO" id="GO:0016992">
    <property type="term" value="F:lipoate synthase activity"/>
    <property type="evidence" value="ECO:0007669"/>
    <property type="project" value="UniProtKB-UniRule"/>
</dbReference>
<dbReference type="GO" id="GO:0046872">
    <property type="term" value="F:metal ion binding"/>
    <property type="evidence" value="ECO:0007669"/>
    <property type="project" value="UniProtKB-KW"/>
</dbReference>
<dbReference type="CDD" id="cd01335">
    <property type="entry name" value="Radical_SAM"/>
    <property type="match status" value="1"/>
</dbReference>
<dbReference type="Gene3D" id="3.20.20.70">
    <property type="entry name" value="Aldolase class I"/>
    <property type="match status" value="1"/>
</dbReference>
<dbReference type="HAMAP" id="MF_00206">
    <property type="entry name" value="Lipoyl_synth"/>
    <property type="match status" value="1"/>
</dbReference>
<dbReference type="InterPro" id="IPR013785">
    <property type="entry name" value="Aldolase_TIM"/>
</dbReference>
<dbReference type="InterPro" id="IPR006638">
    <property type="entry name" value="Elp3/MiaA/NifB-like_rSAM"/>
</dbReference>
<dbReference type="InterPro" id="IPR031691">
    <property type="entry name" value="LIAS_N"/>
</dbReference>
<dbReference type="InterPro" id="IPR003698">
    <property type="entry name" value="Lipoyl_synth"/>
</dbReference>
<dbReference type="InterPro" id="IPR007197">
    <property type="entry name" value="rSAM"/>
</dbReference>
<dbReference type="NCBIfam" id="TIGR00510">
    <property type="entry name" value="lipA"/>
    <property type="match status" value="1"/>
</dbReference>
<dbReference type="NCBIfam" id="NF004019">
    <property type="entry name" value="PRK05481.1"/>
    <property type="match status" value="1"/>
</dbReference>
<dbReference type="NCBIfam" id="NF009544">
    <property type="entry name" value="PRK12928.1"/>
    <property type="match status" value="1"/>
</dbReference>
<dbReference type="PANTHER" id="PTHR10949">
    <property type="entry name" value="LIPOYL SYNTHASE"/>
    <property type="match status" value="1"/>
</dbReference>
<dbReference type="PANTHER" id="PTHR10949:SF0">
    <property type="entry name" value="LIPOYL SYNTHASE, MITOCHONDRIAL"/>
    <property type="match status" value="1"/>
</dbReference>
<dbReference type="Pfam" id="PF16881">
    <property type="entry name" value="LIAS_N"/>
    <property type="match status" value="1"/>
</dbReference>
<dbReference type="Pfam" id="PF04055">
    <property type="entry name" value="Radical_SAM"/>
    <property type="match status" value="1"/>
</dbReference>
<dbReference type="PIRSF" id="PIRSF005963">
    <property type="entry name" value="Lipoyl_synth"/>
    <property type="match status" value="1"/>
</dbReference>
<dbReference type="SFLD" id="SFLDF00271">
    <property type="entry name" value="lipoyl_synthase"/>
    <property type="match status" value="1"/>
</dbReference>
<dbReference type="SFLD" id="SFLDS00029">
    <property type="entry name" value="Radical_SAM"/>
    <property type="match status" value="1"/>
</dbReference>
<dbReference type="SMART" id="SM00729">
    <property type="entry name" value="Elp3"/>
    <property type="match status" value="1"/>
</dbReference>
<dbReference type="SUPFAM" id="SSF102114">
    <property type="entry name" value="Radical SAM enzymes"/>
    <property type="match status" value="1"/>
</dbReference>
<dbReference type="PROSITE" id="PS51918">
    <property type="entry name" value="RADICAL_SAM"/>
    <property type="match status" value="1"/>
</dbReference>